<evidence type="ECO:0000255" key="1">
    <source>
        <dbReference type="HAMAP-Rule" id="MF_00019"/>
    </source>
</evidence>
<feature type="chain" id="PRO_1000057174" description="Phosphate acyltransferase">
    <location>
        <begin position="1"/>
        <end position="351"/>
    </location>
</feature>
<organism>
    <name type="scientific">Paramagnetospirillum magneticum (strain ATCC 700264 / AMB-1)</name>
    <name type="common">Magnetospirillum magneticum</name>
    <dbReference type="NCBI Taxonomy" id="342108"/>
    <lineage>
        <taxon>Bacteria</taxon>
        <taxon>Pseudomonadati</taxon>
        <taxon>Pseudomonadota</taxon>
        <taxon>Alphaproteobacteria</taxon>
        <taxon>Rhodospirillales</taxon>
        <taxon>Magnetospirillaceae</taxon>
        <taxon>Paramagnetospirillum</taxon>
    </lineage>
</organism>
<dbReference type="EC" id="2.3.1.274" evidence="1"/>
<dbReference type="EMBL" id="AP007255">
    <property type="protein sequence ID" value="BAE51157.1"/>
    <property type="molecule type" value="Genomic_DNA"/>
</dbReference>
<dbReference type="RefSeq" id="WP_011384749.1">
    <property type="nucleotide sequence ID" value="NC_007626.1"/>
</dbReference>
<dbReference type="SMR" id="Q2W4R8"/>
<dbReference type="STRING" id="342108.amb2353"/>
<dbReference type="KEGG" id="mag:amb2353"/>
<dbReference type="HOGENOM" id="CLU_039379_1_0_5"/>
<dbReference type="OrthoDB" id="9806408at2"/>
<dbReference type="UniPathway" id="UPA00085"/>
<dbReference type="Proteomes" id="UP000007058">
    <property type="component" value="Chromosome"/>
</dbReference>
<dbReference type="GO" id="GO:0005737">
    <property type="term" value="C:cytoplasm"/>
    <property type="evidence" value="ECO:0007669"/>
    <property type="project" value="UniProtKB-SubCell"/>
</dbReference>
<dbReference type="GO" id="GO:0043811">
    <property type="term" value="F:phosphate:acyl-[acyl carrier protein] acyltransferase activity"/>
    <property type="evidence" value="ECO:0007669"/>
    <property type="project" value="UniProtKB-UniRule"/>
</dbReference>
<dbReference type="GO" id="GO:0006633">
    <property type="term" value="P:fatty acid biosynthetic process"/>
    <property type="evidence" value="ECO:0007669"/>
    <property type="project" value="UniProtKB-UniRule"/>
</dbReference>
<dbReference type="GO" id="GO:0008654">
    <property type="term" value="P:phospholipid biosynthetic process"/>
    <property type="evidence" value="ECO:0007669"/>
    <property type="project" value="UniProtKB-KW"/>
</dbReference>
<dbReference type="Gene3D" id="3.40.718.10">
    <property type="entry name" value="Isopropylmalate Dehydrogenase"/>
    <property type="match status" value="1"/>
</dbReference>
<dbReference type="HAMAP" id="MF_00019">
    <property type="entry name" value="PlsX"/>
    <property type="match status" value="1"/>
</dbReference>
<dbReference type="InterPro" id="IPR003664">
    <property type="entry name" value="FA_synthesis"/>
</dbReference>
<dbReference type="InterPro" id="IPR012281">
    <property type="entry name" value="Phospholipid_synth_PlsX-like"/>
</dbReference>
<dbReference type="NCBIfam" id="TIGR00182">
    <property type="entry name" value="plsX"/>
    <property type="match status" value="1"/>
</dbReference>
<dbReference type="PANTHER" id="PTHR30100">
    <property type="entry name" value="FATTY ACID/PHOSPHOLIPID SYNTHESIS PROTEIN PLSX"/>
    <property type="match status" value="1"/>
</dbReference>
<dbReference type="PANTHER" id="PTHR30100:SF1">
    <property type="entry name" value="PHOSPHATE ACYLTRANSFERASE"/>
    <property type="match status" value="1"/>
</dbReference>
<dbReference type="Pfam" id="PF02504">
    <property type="entry name" value="FA_synthesis"/>
    <property type="match status" value="1"/>
</dbReference>
<dbReference type="PIRSF" id="PIRSF002465">
    <property type="entry name" value="Phsphlp_syn_PlsX"/>
    <property type="match status" value="1"/>
</dbReference>
<dbReference type="SUPFAM" id="SSF53659">
    <property type="entry name" value="Isocitrate/Isopropylmalate dehydrogenase-like"/>
    <property type="match status" value="1"/>
</dbReference>
<keyword id="KW-0963">Cytoplasm</keyword>
<keyword id="KW-0444">Lipid biosynthesis</keyword>
<keyword id="KW-0443">Lipid metabolism</keyword>
<keyword id="KW-0594">Phospholipid biosynthesis</keyword>
<keyword id="KW-1208">Phospholipid metabolism</keyword>
<keyword id="KW-0808">Transferase</keyword>
<protein>
    <recommendedName>
        <fullName evidence="1">Phosphate acyltransferase</fullName>
        <ecNumber evidence="1">2.3.1.274</ecNumber>
    </recommendedName>
    <alternativeName>
        <fullName evidence="1">Acyl-ACP phosphotransacylase</fullName>
    </alternativeName>
    <alternativeName>
        <fullName evidence="1">Acyl-[acyl-carrier-protein]--phosphate acyltransferase</fullName>
    </alternativeName>
    <alternativeName>
        <fullName evidence="1">Phosphate-acyl-ACP acyltransferase</fullName>
    </alternativeName>
</protein>
<accession>Q2W4R8</accession>
<reference key="1">
    <citation type="journal article" date="2005" name="DNA Res.">
        <title>Complete genome sequence of the facultative anaerobic magnetotactic bacterium Magnetospirillum sp. strain AMB-1.</title>
        <authorList>
            <person name="Matsunaga T."/>
            <person name="Okamura Y."/>
            <person name="Fukuda Y."/>
            <person name="Wahyudi A.T."/>
            <person name="Murase Y."/>
            <person name="Takeyama H."/>
        </authorList>
    </citation>
    <scope>NUCLEOTIDE SEQUENCE [LARGE SCALE GENOMIC DNA]</scope>
    <source>
        <strain>ATCC 700264 / AMB-1</strain>
    </source>
</reference>
<comment type="function">
    <text evidence="1">Catalyzes the reversible formation of acyl-phosphate (acyl-PO(4)) from acyl-[acyl-carrier-protein] (acyl-ACP). This enzyme utilizes acyl-ACP as fatty acyl donor, but not acyl-CoA.</text>
</comment>
<comment type="catalytic activity">
    <reaction evidence="1">
        <text>a fatty acyl-[ACP] + phosphate = an acyl phosphate + holo-[ACP]</text>
        <dbReference type="Rhea" id="RHEA:42292"/>
        <dbReference type="Rhea" id="RHEA-COMP:9685"/>
        <dbReference type="Rhea" id="RHEA-COMP:14125"/>
        <dbReference type="ChEBI" id="CHEBI:43474"/>
        <dbReference type="ChEBI" id="CHEBI:59918"/>
        <dbReference type="ChEBI" id="CHEBI:64479"/>
        <dbReference type="ChEBI" id="CHEBI:138651"/>
        <dbReference type="EC" id="2.3.1.274"/>
    </reaction>
</comment>
<comment type="pathway">
    <text evidence="1">Lipid metabolism; phospholipid metabolism.</text>
</comment>
<comment type="subunit">
    <text evidence="1">Homodimer. Probably interacts with PlsY.</text>
</comment>
<comment type="subcellular location">
    <subcellularLocation>
        <location evidence="1">Cytoplasm</location>
    </subcellularLocation>
    <text evidence="1">Associated with the membrane possibly through PlsY.</text>
</comment>
<comment type="similarity">
    <text evidence="1">Belongs to the PlsX family.</text>
</comment>
<name>PLSX_PARM1</name>
<gene>
    <name evidence="1" type="primary">plsX</name>
    <name type="ordered locus">amb2353</name>
</gene>
<proteinExistence type="inferred from homology"/>
<sequence length="351" mass="37391">MSAAVTISIDAMGGDAAPDMVVEGVRMAHERLPHVRYLMFGDASRIEPLLARFPEIRGVCTIHHTEESVSMEAKPSQVLRQGRKSSMWLAVEAVQKGEAAGIVSAGNTGALMAVSKFVLRMLPGIDRPAIAGMFPTVKGETLMLDLGANVDCNSNNLVEFAVMGEVYARAVLGLEKPSIGLLNVGSEDMKGNDAVKAAAAALRDSHLPISFYGFVEGNDICGGTVDVVVTDGFTGNIALKTAEGTVKLYSTFLKEGFQSSLLAKFGYLFARHAINKVKVRTDPRRYNGAMFLGLNGIAVKSHGGTDAFGFANAVGVAVELVTHGYNDRIRKEFDRLKPAEVSPSQLAAGTR</sequence>